<proteinExistence type="inferred from homology"/>
<evidence type="ECO:0000255" key="1">
    <source>
        <dbReference type="HAMAP-Rule" id="MF_00059"/>
    </source>
</evidence>
<sequence>MLIAQRPTLTEESLNPQRSRFTIEPLEPGFGYTLGNSLRRTLLSSIPGAAVTSVRISGALHEFTTLPGVQEDVTEILLNIKGIVLTSEYDEPVVMYLRKSGKGEAVAGDITPPAGVTIANPEQHIATLADDGELEIEFTVERGRGYVPAQMNKQDNDEIGRIPVDSIYSPVLKVSYKVEATRVEQRTDFDKLILDVETKPAISPRDAVASAGSTLVELFGLCRELNAQAEGVEVGPAPVAEETNPEMAVPIEDLNLTQRSYNCLKREGIHTIGELVSHTEQDLLDIRNFGMKSIDEVKEKLQTLGLSLKSSPMAFDTNNLEGGTFFSPEDE</sequence>
<organism>
    <name type="scientific">Bifidobacterium longum (strain NCC 2705)</name>
    <dbReference type="NCBI Taxonomy" id="206672"/>
    <lineage>
        <taxon>Bacteria</taxon>
        <taxon>Bacillati</taxon>
        <taxon>Actinomycetota</taxon>
        <taxon>Actinomycetes</taxon>
        <taxon>Bifidobacteriales</taxon>
        <taxon>Bifidobacteriaceae</taxon>
        <taxon>Bifidobacterium</taxon>
    </lineage>
</organism>
<reference key="1">
    <citation type="journal article" date="2002" name="Proc. Natl. Acad. Sci. U.S.A.">
        <title>The genome sequence of Bifidobacterium longum reflects its adaptation to the human gastrointestinal tract.</title>
        <authorList>
            <person name="Schell M.A."/>
            <person name="Karmirantzou M."/>
            <person name="Snel B."/>
            <person name="Vilanova D."/>
            <person name="Berger B."/>
            <person name="Pessi G."/>
            <person name="Zwahlen M.-C."/>
            <person name="Desiere F."/>
            <person name="Bork P."/>
            <person name="Delley M."/>
            <person name="Pridmore R.D."/>
            <person name="Arigoni F."/>
        </authorList>
    </citation>
    <scope>NUCLEOTIDE SEQUENCE [LARGE SCALE GENOMIC DNA]</scope>
    <source>
        <strain>NCC 2705</strain>
    </source>
</reference>
<gene>
    <name evidence="1" type="primary">rpoA</name>
    <name type="ordered locus">BL1606</name>
</gene>
<comment type="function">
    <text evidence="1">DNA-dependent RNA polymerase catalyzes the transcription of DNA into RNA using the four ribonucleoside triphosphates as substrates.</text>
</comment>
<comment type="catalytic activity">
    <reaction evidence="1">
        <text>RNA(n) + a ribonucleoside 5'-triphosphate = RNA(n+1) + diphosphate</text>
        <dbReference type="Rhea" id="RHEA:21248"/>
        <dbReference type="Rhea" id="RHEA-COMP:14527"/>
        <dbReference type="Rhea" id="RHEA-COMP:17342"/>
        <dbReference type="ChEBI" id="CHEBI:33019"/>
        <dbReference type="ChEBI" id="CHEBI:61557"/>
        <dbReference type="ChEBI" id="CHEBI:140395"/>
        <dbReference type="EC" id="2.7.7.6"/>
    </reaction>
</comment>
<comment type="subunit">
    <text evidence="1">Homodimer. The RNAP catalytic core consists of 2 alpha, 1 beta, 1 beta' and 1 omega subunit. When a sigma factor is associated with the core the holoenzyme is formed, which can initiate transcription.</text>
</comment>
<comment type="domain">
    <text evidence="1">The N-terminal domain is essential for RNAP assembly and basal transcription, whereas the C-terminal domain is involved in interaction with transcriptional regulators and with upstream promoter elements.</text>
</comment>
<comment type="similarity">
    <text evidence="1">Belongs to the RNA polymerase alpha chain family.</text>
</comment>
<dbReference type="EC" id="2.7.7.6" evidence="1"/>
<dbReference type="EMBL" id="AE014295">
    <property type="protein sequence ID" value="AAN25395.1"/>
    <property type="molecule type" value="Genomic_DNA"/>
</dbReference>
<dbReference type="RefSeq" id="NP_696759.1">
    <property type="nucleotide sequence ID" value="NC_004307.2"/>
</dbReference>
<dbReference type="RefSeq" id="WP_007053048.1">
    <property type="nucleotide sequence ID" value="NC_004307.2"/>
</dbReference>
<dbReference type="SMR" id="Q8G3Z3"/>
<dbReference type="STRING" id="206672.BL1606"/>
<dbReference type="EnsemblBacteria" id="AAN25395">
    <property type="protein sequence ID" value="AAN25395"/>
    <property type="gene ID" value="BL1606"/>
</dbReference>
<dbReference type="KEGG" id="blo:BL1606"/>
<dbReference type="PATRIC" id="fig|206672.9.peg.1661"/>
<dbReference type="HOGENOM" id="CLU_053084_0_1_11"/>
<dbReference type="OrthoDB" id="9805706at2"/>
<dbReference type="PhylomeDB" id="Q8G3Z3"/>
<dbReference type="Proteomes" id="UP000000439">
    <property type="component" value="Chromosome"/>
</dbReference>
<dbReference type="GO" id="GO:0005737">
    <property type="term" value="C:cytoplasm"/>
    <property type="evidence" value="ECO:0007669"/>
    <property type="project" value="UniProtKB-ARBA"/>
</dbReference>
<dbReference type="GO" id="GO:0000428">
    <property type="term" value="C:DNA-directed RNA polymerase complex"/>
    <property type="evidence" value="ECO:0007669"/>
    <property type="project" value="UniProtKB-KW"/>
</dbReference>
<dbReference type="GO" id="GO:0003677">
    <property type="term" value="F:DNA binding"/>
    <property type="evidence" value="ECO:0007669"/>
    <property type="project" value="UniProtKB-UniRule"/>
</dbReference>
<dbReference type="GO" id="GO:0003899">
    <property type="term" value="F:DNA-directed RNA polymerase activity"/>
    <property type="evidence" value="ECO:0007669"/>
    <property type="project" value="UniProtKB-UniRule"/>
</dbReference>
<dbReference type="GO" id="GO:0046983">
    <property type="term" value="F:protein dimerization activity"/>
    <property type="evidence" value="ECO:0007669"/>
    <property type="project" value="InterPro"/>
</dbReference>
<dbReference type="GO" id="GO:0006351">
    <property type="term" value="P:DNA-templated transcription"/>
    <property type="evidence" value="ECO:0007669"/>
    <property type="project" value="UniProtKB-UniRule"/>
</dbReference>
<dbReference type="CDD" id="cd06928">
    <property type="entry name" value="RNAP_alpha_NTD"/>
    <property type="match status" value="1"/>
</dbReference>
<dbReference type="FunFam" id="1.10.150.20:FF:000001">
    <property type="entry name" value="DNA-directed RNA polymerase subunit alpha"/>
    <property type="match status" value="1"/>
</dbReference>
<dbReference type="FunFam" id="2.170.120.12:FF:000001">
    <property type="entry name" value="DNA-directed RNA polymerase subunit alpha"/>
    <property type="match status" value="1"/>
</dbReference>
<dbReference type="Gene3D" id="1.10.150.20">
    <property type="entry name" value="5' to 3' exonuclease, C-terminal subdomain"/>
    <property type="match status" value="1"/>
</dbReference>
<dbReference type="Gene3D" id="2.170.120.12">
    <property type="entry name" value="DNA-directed RNA polymerase, insert domain"/>
    <property type="match status" value="1"/>
</dbReference>
<dbReference type="Gene3D" id="3.30.1360.10">
    <property type="entry name" value="RNA polymerase, RBP11-like subunit"/>
    <property type="match status" value="1"/>
</dbReference>
<dbReference type="HAMAP" id="MF_00059">
    <property type="entry name" value="RNApol_bact_RpoA"/>
    <property type="match status" value="1"/>
</dbReference>
<dbReference type="InterPro" id="IPR011262">
    <property type="entry name" value="DNA-dir_RNA_pol_insert"/>
</dbReference>
<dbReference type="InterPro" id="IPR011263">
    <property type="entry name" value="DNA-dir_RNA_pol_RpoA/D/Rpb3"/>
</dbReference>
<dbReference type="InterPro" id="IPR011773">
    <property type="entry name" value="DNA-dir_RpoA"/>
</dbReference>
<dbReference type="InterPro" id="IPR036603">
    <property type="entry name" value="RBP11-like"/>
</dbReference>
<dbReference type="InterPro" id="IPR011260">
    <property type="entry name" value="RNAP_asu_C"/>
</dbReference>
<dbReference type="InterPro" id="IPR036643">
    <property type="entry name" value="RNApol_insert_sf"/>
</dbReference>
<dbReference type="NCBIfam" id="NF003513">
    <property type="entry name" value="PRK05182.1-2"/>
    <property type="match status" value="1"/>
</dbReference>
<dbReference type="NCBIfam" id="NF003514">
    <property type="entry name" value="PRK05182.1-4"/>
    <property type="match status" value="1"/>
</dbReference>
<dbReference type="NCBIfam" id="NF003519">
    <property type="entry name" value="PRK05182.2-5"/>
    <property type="match status" value="1"/>
</dbReference>
<dbReference type="NCBIfam" id="TIGR02027">
    <property type="entry name" value="rpoA"/>
    <property type="match status" value="1"/>
</dbReference>
<dbReference type="Pfam" id="PF01000">
    <property type="entry name" value="RNA_pol_A_bac"/>
    <property type="match status" value="1"/>
</dbReference>
<dbReference type="Pfam" id="PF03118">
    <property type="entry name" value="RNA_pol_A_CTD"/>
    <property type="match status" value="1"/>
</dbReference>
<dbReference type="Pfam" id="PF01193">
    <property type="entry name" value="RNA_pol_L"/>
    <property type="match status" value="1"/>
</dbReference>
<dbReference type="SMART" id="SM00662">
    <property type="entry name" value="RPOLD"/>
    <property type="match status" value="1"/>
</dbReference>
<dbReference type="SUPFAM" id="SSF47789">
    <property type="entry name" value="C-terminal domain of RNA polymerase alpha subunit"/>
    <property type="match status" value="1"/>
</dbReference>
<dbReference type="SUPFAM" id="SSF56553">
    <property type="entry name" value="Insert subdomain of RNA polymerase alpha subunit"/>
    <property type="match status" value="1"/>
</dbReference>
<dbReference type="SUPFAM" id="SSF55257">
    <property type="entry name" value="RBP11-like subunits of RNA polymerase"/>
    <property type="match status" value="1"/>
</dbReference>
<name>RPOA_BIFLO</name>
<accession>Q8G3Z3</accession>
<feature type="chain" id="PRO_0000175270" description="DNA-directed RNA polymerase subunit alpha">
    <location>
        <begin position="1"/>
        <end position="331"/>
    </location>
</feature>
<feature type="region of interest" description="Alpha N-terminal domain (alpha-NTD)" evidence="1">
    <location>
        <begin position="1"/>
        <end position="226"/>
    </location>
</feature>
<feature type="region of interest" description="Alpha C-terminal domain (alpha-CTD)" evidence="1">
    <location>
        <begin position="243"/>
        <end position="331"/>
    </location>
</feature>
<keyword id="KW-0240">DNA-directed RNA polymerase</keyword>
<keyword id="KW-0548">Nucleotidyltransferase</keyword>
<keyword id="KW-1185">Reference proteome</keyword>
<keyword id="KW-0804">Transcription</keyword>
<keyword id="KW-0808">Transferase</keyword>
<protein>
    <recommendedName>
        <fullName evidence="1">DNA-directed RNA polymerase subunit alpha</fullName>
        <shortName evidence="1">RNAP subunit alpha</shortName>
        <ecNumber evidence="1">2.7.7.6</ecNumber>
    </recommendedName>
    <alternativeName>
        <fullName evidence="1">RNA polymerase subunit alpha</fullName>
    </alternativeName>
    <alternativeName>
        <fullName evidence="1">Transcriptase subunit alpha</fullName>
    </alternativeName>
</protein>